<accession>Q02GN4</accession>
<name>NDPA_PSEAB</name>
<keyword id="KW-0963">Cytoplasm</keyword>
<comment type="subcellular location">
    <subcellularLocation>
        <location evidence="1">Cytoplasm</location>
        <location evidence="1">Nucleoid</location>
    </subcellularLocation>
</comment>
<comment type="similarity">
    <text evidence="1">Belongs to the YejK family.</text>
</comment>
<proteinExistence type="inferred from homology"/>
<evidence type="ECO:0000255" key="1">
    <source>
        <dbReference type="HAMAP-Rule" id="MF_00730"/>
    </source>
</evidence>
<reference key="1">
    <citation type="journal article" date="2006" name="Genome Biol.">
        <title>Genomic analysis reveals that Pseudomonas aeruginosa virulence is combinatorial.</title>
        <authorList>
            <person name="Lee D.G."/>
            <person name="Urbach J.M."/>
            <person name="Wu G."/>
            <person name="Liberati N.T."/>
            <person name="Feinbaum R.L."/>
            <person name="Miyata S."/>
            <person name="Diggins L.T."/>
            <person name="He J."/>
            <person name="Saucier M."/>
            <person name="Deziel E."/>
            <person name="Friedman L."/>
            <person name="Li L."/>
            <person name="Grills G."/>
            <person name="Montgomery K."/>
            <person name="Kucherlapati R."/>
            <person name="Rahme L.G."/>
            <person name="Ausubel F.M."/>
        </authorList>
    </citation>
    <scope>NUCLEOTIDE SEQUENCE [LARGE SCALE GENOMIC DNA]</scope>
    <source>
        <strain>UCBPP-PA14</strain>
    </source>
</reference>
<gene>
    <name type="ordered locus">PA14_59050</name>
</gene>
<protein>
    <recommendedName>
        <fullName evidence="1">Nucleoid-associated protein PA14_59050</fullName>
    </recommendedName>
</protein>
<sequence>MPIKHAIVHLIEKKPDGTPAVLHARDAELGDSQAIENLLADLNESYNAKNKAWGFFQGESGAYPFSGWLGEYLEGDRDFVGFSREAVEHLQKLMEESNLSTGGHVLFAHYQQGMTDYLAIALLHHSEGVAVNESLEVTPSRHLDLGQLHLAARINISEWRNNKQSKQYISFIKGKGGRKVSDYFRDFIGCQEGVDSPSETRTLLKAFSDFVESEDMAEEQAREKTETLVDYATSQARIGEPMTLDALSELMDDQQPRAFYDYIRNKDYGLSPEIPADKRTLNQFRRFTGRAEGLSISFEAHLLGSRIEYDEERDTLQISSLPTQLRDQLKRRKAQIGE</sequence>
<feature type="chain" id="PRO_1000045932" description="Nucleoid-associated protein PA14_59050">
    <location>
        <begin position="1"/>
        <end position="338"/>
    </location>
</feature>
<dbReference type="EMBL" id="CP000438">
    <property type="protein sequence ID" value="ABJ13823.1"/>
    <property type="molecule type" value="Genomic_DNA"/>
</dbReference>
<dbReference type="SMR" id="Q02GN4"/>
<dbReference type="KEGG" id="pau:PA14_59050"/>
<dbReference type="PseudoCAP" id="PA14_59050"/>
<dbReference type="HOGENOM" id="CLU_063050_0_1_6"/>
<dbReference type="BioCyc" id="PAER208963:G1G74-4976-MONOMER"/>
<dbReference type="Proteomes" id="UP000000653">
    <property type="component" value="Chromosome"/>
</dbReference>
<dbReference type="GO" id="GO:0043590">
    <property type="term" value="C:bacterial nucleoid"/>
    <property type="evidence" value="ECO:0007669"/>
    <property type="project" value="TreeGrafter"/>
</dbReference>
<dbReference type="GO" id="GO:0005737">
    <property type="term" value="C:cytoplasm"/>
    <property type="evidence" value="ECO:0007669"/>
    <property type="project" value="UniProtKB-UniRule"/>
</dbReference>
<dbReference type="GO" id="GO:0003690">
    <property type="term" value="F:double-stranded DNA binding"/>
    <property type="evidence" value="ECO:0007669"/>
    <property type="project" value="TreeGrafter"/>
</dbReference>
<dbReference type="GO" id="GO:0003727">
    <property type="term" value="F:single-stranded RNA binding"/>
    <property type="evidence" value="ECO:0007669"/>
    <property type="project" value="TreeGrafter"/>
</dbReference>
<dbReference type="HAMAP" id="MF_00730">
    <property type="entry name" value="NdpA"/>
    <property type="match status" value="1"/>
</dbReference>
<dbReference type="InterPro" id="IPR007358">
    <property type="entry name" value="Nucleoid_associated_NdpA"/>
</dbReference>
<dbReference type="NCBIfam" id="NF001557">
    <property type="entry name" value="PRK00378.1"/>
    <property type="match status" value="1"/>
</dbReference>
<dbReference type="PANTHER" id="PTHR38772">
    <property type="match status" value="1"/>
</dbReference>
<dbReference type="PANTHER" id="PTHR38772:SF1">
    <property type="entry name" value="NUCLEOID-ASSOCIATED PROTEIN YEJK"/>
    <property type="match status" value="1"/>
</dbReference>
<dbReference type="Pfam" id="PF04245">
    <property type="entry name" value="NA37"/>
    <property type="match status" value="1"/>
</dbReference>
<organism>
    <name type="scientific">Pseudomonas aeruginosa (strain UCBPP-PA14)</name>
    <dbReference type="NCBI Taxonomy" id="208963"/>
    <lineage>
        <taxon>Bacteria</taxon>
        <taxon>Pseudomonadati</taxon>
        <taxon>Pseudomonadota</taxon>
        <taxon>Gammaproteobacteria</taxon>
        <taxon>Pseudomonadales</taxon>
        <taxon>Pseudomonadaceae</taxon>
        <taxon>Pseudomonas</taxon>
    </lineage>
</organism>